<feature type="chain" id="PRO_0000269384" description="Large ribosomal subunit protein bL21">
    <location>
        <begin position="1"/>
        <end position="102"/>
    </location>
</feature>
<feature type="region of interest" description="Disordered" evidence="2">
    <location>
        <begin position="80"/>
        <end position="102"/>
    </location>
</feature>
<feature type="compositionally biased region" description="Basic residues" evidence="2">
    <location>
        <begin position="80"/>
        <end position="91"/>
    </location>
</feature>
<sequence>MFAIIETGGKQIKVEEGQEIFVEKLDVNEGDTFTFDKVLFVGGDSVKVGAPTVEGATVTATVNKQGRGKKITVFTYKRRKNSKRKKGHRQPYTKLTIDKINA</sequence>
<name>RL21_STAAB</name>
<reference key="1">
    <citation type="journal article" date="2007" name="PLoS ONE">
        <title>Molecular correlates of host specialization in Staphylococcus aureus.</title>
        <authorList>
            <person name="Herron-Olson L."/>
            <person name="Fitzgerald J.R."/>
            <person name="Musser J.M."/>
            <person name="Kapur V."/>
        </authorList>
    </citation>
    <scope>NUCLEOTIDE SEQUENCE [LARGE SCALE GENOMIC DNA]</scope>
    <source>
        <strain>bovine RF122 / ET3-1</strain>
    </source>
</reference>
<organism>
    <name type="scientific">Staphylococcus aureus (strain bovine RF122 / ET3-1)</name>
    <dbReference type="NCBI Taxonomy" id="273036"/>
    <lineage>
        <taxon>Bacteria</taxon>
        <taxon>Bacillati</taxon>
        <taxon>Bacillota</taxon>
        <taxon>Bacilli</taxon>
        <taxon>Bacillales</taxon>
        <taxon>Staphylococcaceae</taxon>
        <taxon>Staphylococcus</taxon>
    </lineage>
</organism>
<proteinExistence type="evidence at protein level"/>
<evidence type="ECO:0000255" key="1">
    <source>
        <dbReference type="HAMAP-Rule" id="MF_01363"/>
    </source>
</evidence>
<evidence type="ECO:0000256" key="2">
    <source>
        <dbReference type="SAM" id="MobiDB-lite"/>
    </source>
</evidence>
<evidence type="ECO:0000305" key="3"/>
<comment type="function">
    <text evidence="1">This protein binds to 23S rRNA in the presence of protein L20.</text>
</comment>
<comment type="subunit">
    <text evidence="1">Part of the 50S ribosomal subunit. Contacts protein L20.</text>
</comment>
<comment type="similarity">
    <text evidence="1">Belongs to the bacterial ribosomal protein bL21 family.</text>
</comment>
<keyword id="KW-0002">3D-structure</keyword>
<keyword id="KW-0687">Ribonucleoprotein</keyword>
<keyword id="KW-0689">Ribosomal protein</keyword>
<keyword id="KW-0694">RNA-binding</keyword>
<keyword id="KW-0699">rRNA-binding</keyword>
<accession>Q2YT83</accession>
<protein>
    <recommendedName>
        <fullName evidence="1">Large ribosomal subunit protein bL21</fullName>
    </recommendedName>
    <alternativeName>
        <fullName evidence="3">50S ribosomal protein L21</fullName>
    </alternativeName>
</protein>
<dbReference type="EMBL" id="AJ938182">
    <property type="protein sequence ID" value="CAI81205.1"/>
    <property type="molecule type" value="Genomic_DNA"/>
</dbReference>
<dbReference type="RefSeq" id="WP_000457386.1">
    <property type="nucleotide sequence ID" value="NC_007622.1"/>
</dbReference>
<dbReference type="PDB" id="6FXC">
    <property type="method" value="EM"/>
    <property type="resolution" value="6.76 A"/>
    <property type="chains" value="AP/BP=1-102"/>
</dbReference>
<dbReference type="PDBsum" id="6FXC"/>
<dbReference type="EMDB" id="EMD-0243"/>
<dbReference type="EMDB" id="EMD-3637"/>
<dbReference type="SMR" id="Q2YT83"/>
<dbReference type="GeneID" id="66839833"/>
<dbReference type="KEGG" id="sab:SAB1516c"/>
<dbReference type="HOGENOM" id="CLU_061463_3_2_9"/>
<dbReference type="GO" id="GO:0005737">
    <property type="term" value="C:cytoplasm"/>
    <property type="evidence" value="ECO:0007669"/>
    <property type="project" value="UniProtKB-ARBA"/>
</dbReference>
<dbReference type="GO" id="GO:1990904">
    <property type="term" value="C:ribonucleoprotein complex"/>
    <property type="evidence" value="ECO:0007669"/>
    <property type="project" value="UniProtKB-KW"/>
</dbReference>
<dbReference type="GO" id="GO:0005840">
    <property type="term" value="C:ribosome"/>
    <property type="evidence" value="ECO:0007669"/>
    <property type="project" value="UniProtKB-KW"/>
</dbReference>
<dbReference type="GO" id="GO:0019843">
    <property type="term" value="F:rRNA binding"/>
    <property type="evidence" value="ECO:0007669"/>
    <property type="project" value="UniProtKB-UniRule"/>
</dbReference>
<dbReference type="GO" id="GO:0003735">
    <property type="term" value="F:structural constituent of ribosome"/>
    <property type="evidence" value="ECO:0007669"/>
    <property type="project" value="InterPro"/>
</dbReference>
<dbReference type="GO" id="GO:0006412">
    <property type="term" value="P:translation"/>
    <property type="evidence" value="ECO:0007669"/>
    <property type="project" value="UniProtKB-UniRule"/>
</dbReference>
<dbReference type="HAMAP" id="MF_01363">
    <property type="entry name" value="Ribosomal_bL21"/>
    <property type="match status" value="1"/>
</dbReference>
<dbReference type="InterPro" id="IPR028909">
    <property type="entry name" value="bL21-like"/>
</dbReference>
<dbReference type="InterPro" id="IPR036164">
    <property type="entry name" value="bL21-like_sf"/>
</dbReference>
<dbReference type="InterPro" id="IPR001787">
    <property type="entry name" value="Ribosomal_bL21"/>
</dbReference>
<dbReference type="NCBIfam" id="TIGR00061">
    <property type="entry name" value="L21"/>
    <property type="match status" value="1"/>
</dbReference>
<dbReference type="PANTHER" id="PTHR21349">
    <property type="entry name" value="50S RIBOSOMAL PROTEIN L21"/>
    <property type="match status" value="1"/>
</dbReference>
<dbReference type="PANTHER" id="PTHR21349:SF0">
    <property type="entry name" value="LARGE RIBOSOMAL SUBUNIT PROTEIN BL21M"/>
    <property type="match status" value="1"/>
</dbReference>
<dbReference type="Pfam" id="PF00829">
    <property type="entry name" value="Ribosomal_L21p"/>
    <property type="match status" value="1"/>
</dbReference>
<dbReference type="SUPFAM" id="SSF141091">
    <property type="entry name" value="L21p-like"/>
    <property type="match status" value="1"/>
</dbReference>
<gene>
    <name evidence="1" type="primary">rplU</name>
    <name type="ordered locus">SAB1516c</name>
</gene>